<keyword id="KW-0067">ATP-binding</keyword>
<keyword id="KW-0418">Kinase</keyword>
<keyword id="KW-0547">Nucleotide-binding</keyword>
<keyword id="KW-0597">Phosphoprotein</keyword>
<keyword id="KW-1185">Reference proteome</keyword>
<keyword id="KW-0808">Transferase</keyword>
<accession>Q8EQN3</accession>
<comment type="function">
    <text evidence="1">Catalyzes the synthesis of activated sulfate.</text>
</comment>
<comment type="catalytic activity">
    <reaction evidence="1">
        <text>adenosine 5'-phosphosulfate + ATP = 3'-phosphoadenylyl sulfate + ADP + H(+)</text>
        <dbReference type="Rhea" id="RHEA:24152"/>
        <dbReference type="ChEBI" id="CHEBI:15378"/>
        <dbReference type="ChEBI" id="CHEBI:30616"/>
        <dbReference type="ChEBI" id="CHEBI:58243"/>
        <dbReference type="ChEBI" id="CHEBI:58339"/>
        <dbReference type="ChEBI" id="CHEBI:456216"/>
        <dbReference type="EC" id="2.7.1.25"/>
    </reaction>
</comment>
<comment type="pathway">
    <text evidence="1">Sulfur metabolism; hydrogen sulfide biosynthesis; sulfite from sulfate: step 2/3.</text>
</comment>
<comment type="similarity">
    <text evidence="1">Belongs to the APS kinase family.</text>
</comment>
<dbReference type="EC" id="2.7.1.25" evidence="1"/>
<dbReference type="EMBL" id="BA000028">
    <property type="protein sequence ID" value="BAC13617.1"/>
    <property type="molecule type" value="Genomic_DNA"/>
</dbReference>
<dbReference type="RefSeq" id="WP_011066062.1">
    <property type="nucleotide sequence ID" value="NC_004193.1"/>
</dbReference>
<dbReference type="SMR" id="Q8EQN3"/>
<dbReference type="STRING" id="221109.gene:10733901"/>
<dbReference type="KEGG" id="oih:OB1661"/>
<dbReference type="eggNOG" id="COG0529">
    <property type="taxonomic scope" value="Bacteria"/>
</dbReference>
<dbReference type="HOGENOM" id="CLU_046932_1_0_9"/>
<dbReference type="OrthoDB" id="9804504at2"/>
<dbReference type="PhylomeDB" id="Q8EQN3"/>
<dbReference type="UniPathway" id="UPA00140">
    <property type="reaction ID" value="UER00205"/>
</dbReference>
<dbReference type="Proteomes" id="UP000000822">
    <property type="component" value="Chromosome"/>
</dbReference>
<dbReference type="GO" id="GO:0004020">
    <property type="term" value="F:adenylylsulfate kinase activity"/>
    <property type="evidence" value="ECO:0007669"/>
    <property type="project" value="UniProtKB-UniRule"/>
</dbReference>
<dbReference type="GO" id="GO:0005524">
    <property type="term" value="F:ATP binding"/>
    <property type="evidence" value="ECO:0007669"/>
    <property type="project" value="UniProtKB-UniRule"/>
</dbReference>
<dbReference type="GO" id="GO:0070814">
    <property type="term" value="P:hydrogen sulfide biosynthetic process"/>
    <property type="evidence" value="ECO:0007669"/>
    <property type="project" value="UniProtKB-UniRule"/>
</dbReference>
<dbReference type="GO" id="GO:0000103">
    <property type="term" value="P:sulfate assimilation"/>
    <property type="evidence" value="ECO:0007669"/>
    <property type="project" value="UniProtKB-UniRule"/>
</dbReference>
<dbReference type="CDD" id="cd02027">
    <property type="entry name" value="APSK"/>
    <property type="match status" value="1"/>
</dbReference>
<dbReference type="FunFam" id="3.40.50.300:FF:000212">
    <property type="entry name" value="Adenylyl-sulfate kinase"/>
    <property type="match status" value="1"/>
</dbReference>
<dbReference type="Gene3D" id="3.40.50.300">
    <property type="entry name" value="P-loop containing nucleotide triphosphate hydrolases"/>
    <property type="match status" value="1"/>
</dbReference>
<dbReference type="HAMAP" id="MF_00065">
    <property type="entry name" value="Adenylyl_sulf_kinase"/>
    <property type="match status" value="1"/>
</dbReference>
<dbReference type="InterPro" id="IPR002891">
    <property type="entry name" value="APS_kinase"/>
</dbReference>
<dbReference type="InterPro" id="IPR027417">
    <property type="entry name" value="P-loop_NTPase"/>
</dbReference>
<dbReference type="NCBIfam" id="TIGR00455">
    <property type="entry name" value="apsK"/>
    <property type="match status" value="1"/>
</dbReference>
<dbReference type="NCBIfam" id="NF003013">
    <property type="entry name" value="PRK03846.1"/>
    <property type="match status" value="1"/>
</dbReference>
<dbReference type="PANTHER" id="PTHR11055">
    <property type="entry name" value="BIFUNCTIONAL 3'-PHOSPHOADENOSINE 5'-PHOSPHOSULFATE SYNTHASE"/>
    <property type="match status" value="1"/>
</dbReference>
<dbReference type="PANTHER" id="PTHR11055:SF1">
    <property type="entry name" value="PAPS SYNTHETASE, ISOFORM D"/>
    <property type="match status" value="1"/>
</dbReference>
<dbReference type="Pfam" id="PF01583">
    <property type="entry name" value="APS_kinase"/>
    <property type="match status" value="1"/>
</dbReference>
<dbReference type="SUPFAM" id="SSF52540">
    <property type="entry name" value="P-loop containing nucleoside triphosphate hydrolases"/>
    <property type="match status" value="1"/>
</dbReference>
<organism>
    <name type="scientific">Oceanobacillus iheyensis (strain DSM 14371 / CIP 107618 / JCM 11309 / KCTC 3954 / HTE831)</name>
    <dbReference type="NCBI Taxonomy" id="221109"/>
    <lineage>
        <taxon>Bacteria</taxon>
        <taxon>Bacillati</taxon>
        <taxon>Bacillota</taxon>
        <taxon>Bacilli</taxon>
        <taxon>Bacillales</taxon>
        <taxon>Bacillaceae</taxon>
        <taxon>Oceanobacillus</taxon>
    </lineage>
</organism>
<evidence type="ECO:0000255" key="1">
    <source>
        <dbReference type="HAMAP-Rule" id="MF_00065"/>
    </source>
</evidence>
<protein>
    <recommendedName>
        <fullName evidence="1">Adenylyl-sulfate kinase</fullName>
        <ecNumber evidence="1">2.7.1.25</ecNumber>
    </recommendedName>
    <alternativeName>
        <fullName evidence="1">APS kinase</fullName>
    </alternativeName>
    <alternativeName>
        <fullName evidence="1">ATP adenosine-5'-phosphosulfate 3'-phosphotransferase</fullName>
    </alternativeName>
    <alternativeName>
        <fullName evidence="1">Adenosine-5'-phosphosulfate kinase</fullName>
    </alternativeName>
</protein>
<proteinExistence type="inferred from homology"/>
<sequence>MNKSTNIVWQKTSVKKADRQHLNNHKSAVLWFTGLSGSGKSTLSSALEKELFSLETHTYHLDGDNVRHGLNKNLGFSPEDREENIRRIGEVSKLMVDAGLITLTAFISPYQEDRDHVRATLAQDEFIEIYVKCSLDMCEARDPKGLYKKARLGEINNFTGIDAPYEEPLHPEIVIDTENQSIEESVQTIIHYLKDKQYI</sequence>
<feature type="chain" id="PRO_1000009016" description="Adenylyl-sulfate kinase">
    <location>
        <begin position="1"/>
        <end position="199"/>
    </location>
</feature>
<feature type="active site" description="Phosphoserine intermediate" evidence="1">
    <location>
        <position position="108"/>
    </location>
</feature>
<feature type="binding site" evidence="1">
    <location>
        <begin position="34"/>
        <end position="41"/>
    </location>
    <ligand>
        <name>ATP</name>
        <dbReference type="ChEBI" id="CHEBI:30616"/>
    </ligand>
</feature>
<gene>
    <name evidence="1" type="primary">cysC</name>
    <name type="ordered locus">OB1661</name>
</gene>
<name>CYSC_OCEIH</name>
<reference key="1">
    <citation type="journal article" date="2002" name="Nucleic Acids Res.">
        <title>Genome sequence of Oceanobacillus iheyensis isolated from the Iheya Ridge and its unexpected adaptive capabilities to extreme environments.</title>
        <authorList>
            <person name="Takami H."/>
            <person name="Takaki Y."/>
            <person name="Uchiyama I."/>
        </authorList>
    </citation>
    <scope>NUCLEOTIDE SEQUENCE [LARGE SCALE GENOMIC DNA]</scope>
    <source>
        <strain>DSM 14371 / CIP 107618 / JCM 11309 / KCTC 3954 / HTE831</strain>
    </source>
</reference>